<keyword id="KW-0963">Cytoplasm</keyword>
<keyword id="KW-0539">Nucleus</keyword>
<keyword id="KW-1185">Reference proteome</keyword>
<sequence length="180" mass="20240">MTCQEDCSCKNNEAPTTKTTATTTNVGDGPGPGPIPGNNDDDDDDIWSDDDTKLIPENDIIRSHYKKGYVDGITQAKESSLQQGFDDGYPEGAKLGIKVGEILANLINQCKDRNRQGDDDDDDDDEQSVRFNEAKKELNIVNVLKKSYFDEDLNLKKSNDNKETDESYHELINKWENEMK</sequence>
<gene>
    <name type="primary">YAE1</name>
    <name type="ordered locus">CAALFM_C700800CA</name>
    <name type="ORF">CaJ7.0095</name>
    <name type="ORF">CaO19.7037</name>
</gene>
<protein>
    <recommendedName>
        <fullName>Protein YAE1</fullName>
    </recommendedName>
</protein>
<reference key="1">
    <citation type="submission" date="1999-12" db="EMBL/GenBank/DDBJ databases">
        <title>A novel method for systematic identification of genes required for growth of Candida albicans.</title>
        <authorList>
            <person name="De Backer M.D."/>
            <person name="Logghe M."/>
            <person name="Viaene J."/>
            <person name="Loonen I."/>
            <person name="Vandoninck S."/>
            <person name="de Hoogt R."/>
            <person name="Nelissen B."/>
            <person name="Dewaele S."/>
            <person name="Simons F."/>
            <person name="Verhasselt P."/>
            <person name="Contreras R."/>
            <person name="Luyten W.H.M.L."/>
        </authorList>
    </citation>
    <scope>NUCLEOTIDE SEQUENCE [GENOMIC DNA]</scope>
</reference>
<reference key="2">
    <citation type="journal article" date="2005" name="Genetics">
        <title>Sequence finishing and gene mapping for Candida albicans chromosome 7 and syntenic analysis against the Saccharomyces cerevisiae genome.</title>
        <authorList>
            <person name="Chibana H."/>
            <person name="Oka N."/>
            <person name="Nakayama H."/>
            <person name="Aoyama T."/>
            <person name="Magee B.B."/>
            <person name="Magee P.T."/>
            <person name="Mikami Y."/>
        </authorList>
    </citation>
    <scope>NUCLEOTIDE SEQUENCE [LARGE SCALE GENOMIC DNA]</scope>
    <source>
        <strain>SC5314 / ATCC MYA-2876</strain>
    </source>
</reference>
<reference key="3">
    <citation type="journal article" date="2004" name="Proc. Natl. Acad. Sci. U.S.A.">
        <title>The diploid genome sequence of Candida albicans.</title>
        <authorList>
            <person name="Jones T."/>
            <person name="Federspiel N.A."/>
            <person name="Chibana H."/>
            <person name="Dungan J."/>
            <person name="Kalman S."/>
            <person name="Magee B.B."/>
            <person name="Newport G."/>
            <person name="Thorstenson Y.R."/>
            <person name="Agabian N."/>
            <person name="Magee P.T."/>
            <person name="Davis R.W."/>
            <person name="Scherer S."/>
        </authorList>
    </citation>
    <scope>NUCLEOTIDE SEQUENCE [LARGE SCALE GENOMIC DNA]</scope>
    <source>
        <strain>SC5314 / ATCC MYA-2876</strain>
    </source>
</reference>
<reference key="4">
    <citation type="journal article" date="2007" name="Genome Biol.">
        <title>Assembly of the Candida albicans genome into sixteen supercontigs aligned on the eight chromosomes.</title>
        <authorList>
            <person name="van het Hoog M."/>
            <person name="Rast T.J."/>
            <person name="Martchenko M."/>
            <person name="Grindle S."/>
            <person name="Dignard D."/>
            <person name="Hogues H."/>
            <person name="Cuomo C."/>
            <person name="Berriman M."/>
            <person name="Scherer S."/>
            <person name="Magee B.B."/>
            <person name="Whiteway M."/>
            <person name="Chibana H."/>
            <person name="Nantel A."/>
            <person name="Magee P.T."/>
        </authorList>
    </citation>
    <scope>GENOME REANNOTATION</scope>
    <source>
        <strain>SC5314 / ATCC MYA-2876</strain>
    </source>
</reference>
<reference key="5">
    <citation type="journal article" date="2013" name="Genome Biol.">
        <title>Assembly of a phased diploid Candida albicans genome facilitates allele-specific measurements and provides a simple model for repeat and indel structure.</title>
        <authorList>
            <person name="Muzzey D."/>
            <person name="Schwartz K."/>
            <person name="Weissman J.S."/>
            <person name="Sherlock G."/>
        </authorList>
    </citation>
    <scope>NUCLEOTIDE SEQUENCE [LARGE SCALE GENOMIC DNA]</scope>
    <scope>GENOME REANNOTATION</scope>
    <source>
        <strain>SC5314 / ATCC MYA-2876</strain>
    </source>
</reference>
<feature type="chain" id="PRO_0000324423" description="Protein YAE1">
    <location>
        <begin position="1"/>
        <end position="180"/>
    </location>
</feature>
<feature type="region of interest" description="Disordered" evidence="3">
    <location>
        <begin position="1"/>
        <end position="53"/>
    </location>
</feature>
<feature type="region of interest" description="deca-GX3 motif; required for interaction with LTO1" evidence="1">
    <location>
        <begin position="68"/>
        <end position="108"/>
    </location>
</feature>
<feature type="region of interest" description="Disordered" evidence="3">
    <location>
        <begin position="112"/>
        <end position="131"/>
    </location>
</feature>
<feature type="compositionally biased region" description="Polar residues" evidence="3">
    <location>
        <begin position="1"/>
        <end position="15"/>
    </location>
</feature>
<feature type="compositionally biased region" description="Acidic residues" evidence="3">
    <location>
        <begin position="39"/>
        <end position="49"/>
    </location>
</feature>
<evidence type="ECO:0000250" key="1">
    <source>
        <dbReference type="UniProtKB" id="P47118"/>
    </source>
</evidence>
<evidence type="ECO:0000250" key="2">
    <source>
        <dbReference type="UniProtKB" id="Q9NRH1"/>
    </source>
</evidence>
<evidence type="ECO:0000256" key="3">
    <source>
        <dbReference type="SAM" id="MobiDB-lite"/>
    </source>
</evidence>
<evidence type="ECO:0000305" key="4"/>
<dbReference type="EMBL" id="AJ390499">
    <property type="protein sequence ID" value="CAB77639.1"/>
    <property type="molecule type" value="Genomic_DNA"/>
</dbReference>
<dbReference type="EMBL" id="AP006852">
    <property type="protein sequence ID" value="BAE44607.1"/>
    <property type="molecule type" value="Genomic_DNA"/>
</dbReference>
<dbReference type="EMBL" id="CP017629">
    <property type="protein sequence ID" value="AOW30456.1"/>
    <property type="molecule type" value="Genomic_DNA"/>
</dbReference>
<dbReference type="RefSeq" id="XP_720330.1">
    <property type="nucleotide sequence ID" value="XM_715237.1"/>
</dbReference>
<dbReference type="SMR" id="Q9P840"/>
<dbReference type="FunCoup" id="Q9P840">
    <property type="interactions" value="3"/>
</dbReference>
<dbReference type="STRING" id="237561.Q9P840"/>
<dbReference type="EnsemblFungi" id="C7_00800C_A-T">
    <property type="protein sequence ID" value="C7_00800C_A-T-p1"/>
    <property type="gene ID" value="C7_00800C_A"/>
</dbReference>
<dbReference type="GeneID" id="3637941"/>
<dbReference type="KEGG" id="cal:CAALFM_C700800CA"/>
<dbReference type="CGD" id="CAL0000178940">
    <property type="gene designation" value="YAE1"/>
</dbReference>
<dbReference type="VEuPathDB" id="FungiDB:C7_00800C_A"/>
<dbReference type="eggNOG" id="KOG4774">
    <property type="taxonomic scope" value="Eukaryota"/>
</dbReference>
<dbReference type="HOGENOM" id="CLU_066684_2_0_1"/>
<dbReference type="InParanoid" id="Q9P840"/>
<dbReference type="OMA" id="CKNNEAP"/>
<dbReference type="OrthoDB" id="20086at2759"/>
<dbReference type="Proteomes" id="UP000000559">
    <property type="component" value="Chromosome 7"/>
</dbReference>
<dbReference type="GO" id="GO:0005737">
    <property type="term" value="C:cytoplasm"/>
    <property type="evidence" value="ECO:0007669"/>
    <property type="project" value="UniProtKB-SubCell"/>
</dbReference>
<dbReference type="GO" id="GO:0005634">
    <property type="term" value="C:nucleus"/>
    <property type="evidence" value="ECO:0007669"/>
    <property type="project" value="UniProtKB-SubCell"/>
</dbReference>
<dbReference type="GO" id="GO:0051604">
    <property type="term" value="P:protein maturation"/>
    <property type="evidence" value="ECO:0000250"/>
    <property type="project" value="UniProtKB"/>
</dbReference>
<dbReference type="InterPro" id="IPR019191">
    <property type="entry name" value="Essential_protein_Yae1_N"/>
</dbReference>
<dbReference type="InterPro" id="IPR038881">
    <property type="entry name" value="Yae1-like"/>
</dbReference>
<dbReference type="PANTHER" id="PTHR18829">
    <property type="entry name" value="PROTEIN YAE1 HOMOLOG"/>
    <property type="match status" value="1"/>
</dbReference>
<dbReference type="PANTHER" id="PTHR18829:SF0">
    <property type="entry name" value="PROTEIN YAE1 HOMOLOG"/>
    <property type="match status" value="1"/>
</dbReference>
<dbReference type="Pfam" id="PF09811">
    <property type="entry name" value="Yae1_N"/>
    <property type="match status" value="1"/>
</dbReference>
<accession>Q9P840</accession>
<accession>A0A1D8PQQ1</accession>
<accession>Q5AFN1</accession>
<proteinExistence type="inferred from homology"/>
<name>YAE1_CANAL</name>
<comment type="function">
    <text evidence="2">The complex LTO1:YAE1 may function as a target specific adapter that probably recruits apo-RPLI1 to the cytosolic iron-sulfur protein assembly (CIA) complex machinery. May be required for biogenesis of the large ribosomal subunit and initiation of translation.</text>
</comment>
<comment type="subunit">
    <text evidence="2">May form a complex with LTO1.</text>
</comment>
<comment type="subcellular location">
    <subcellularLocation>
        <location evidence="1">Cytoplasm</location>
    </subcellularLocation>
    <subcellularLocation>
        <location evidence="1">Nucleus</location>
    </subcellularLocation>
</comment>
<comment type="similarity">
    <text evidence="4">Belongs to the YAE1 family.</text>
</comment>
<organism>
    <name type="scientific">Candida albicans (strain SC5314 / ATCC MYA-2876)</name>
    <name type="common">Yeast</name>
    <dbReference type="NCBI Taxonomy" id="237561"/>
    <lineage>
        <taxon>Eukaryota</taxon>
        <taxon>Fungi</taxon>
        <taxon>Dikarya</taxon>
        <taxon>Ascomycota</taxon>
        <taxon>Saccharomycotina</taxon>
        <taxon>Pichiomycetes</taxon>
        <taxon>Debaryomycetaceae</taxon>
        <taxon>Candida/Lodderomyces clade</taxon>
        <taxon>Candida</taxon>
    </lineage>
</organism>